<accession>Q3UE17</accession>
<evidence type="ECO:0000250" key="1"/>
<evidence type="ECO:0000250" key="2">
    <source>
        <dbReference type="UniProtKB" id="Q86XN8"/>
    </source>
</evidence>
<evidence type="ECO:0000255" key="3">
    <source>
        <dbReference type="PROSITE-ProRule" id="PRU00117"/>
    </source>
</evidence>
<evidence type="ECO:0000255" key="4">
    <source>
        <dbReference type="PROSITE-ProRule" id="PRU00175"/>
    </source>
</evidence>
<evidence type="ECO:0000256" key="5">
    <source>
        <dbReference type="SAM" id="MobiDB-lite"/>
    </source>
</evidence>
<evidence type="ECO:0000303" key="6">
    <source>
    </source>
</evidence>
<evidence type="ECO:0007744" key="7">
    <source>
    </source>
</evidence>
<sequence length="643" mass="65329">MPGSTGQPDAGGAGTGTTAGDPGHPHPALAGAEDAAPRPPPEPDDAAAALRLALDQLSALGLGGARPGDEGMATRSADGATECGEDEPAPPDELEVAVAPPVTASVAPGGLPLLDPDVSPRPSPPDVFASFAPHPAALGPSTLLAEQLNVIGSRKKSVNMTECVPVPSSEHVAEIVGRQGCKIKALRAKTNTYIKTPVRGEEPVFIVTGRKEDVEMAKREILSAEHFSLIRATRSKAGGLSGATPGPPNLPGQTTIQVRVPYRVVGLVVGPKGATIKRIQQRTHTYIVTPGRDKEPVFAVTGMPENVDRAREEIEAHITLRTGAFTDSGPDSDFHANGTDVCLDLLGAAASLWAKAPHPGRRPPAATGGLRGDNALGAASTPEPFYVGSRGGPPLPDPSPSSPYGGSGNGGFTFGGDGPSAPTGTATPEDCDFGFDFLALDLTVPATATIWAPFERAAPLPAFSGCPAVNGAPAQPNTGTRRSSGGGAATTPRHSPTLPEPGGLSLELPLARRSVPDPVGAVPWRPPQSALPPFSGSTTFSTTPSLPSTTLASSTLDTVPSEGNHKPSTTAANSSASTAAPGPPSAALARECVVCSEGEAMAALVPCGHNLFCMDCAVRICGKSEPECPACRTPATQAIHIFS</sequence>
<dbReference type="EMBL" id="CAAA01108096">
    <property type="status" value="NOT_ANNOTATED_CDS"/>
    <property type="molecule type" value="Genomic_DNA"/>
</dbReference>
<dbReference type="EMBL" id="AC152062">
    <property type="status" value="NOT_ANNOTATED_CDS"/>
    <property type="molecule type" value="Genomic_DNA"/>
</dbReference>
<dbReference type="EMBL" id="AK149801">
    <property type="protein sequence ID" value="BAE29094.1"/>
    <property type="molecule type" value="mRNA"/>
</dbReference>
<dbReference type="RefSeq" id="NP_941017.2">
    <property type="nucleotide sequence ID" value="NM_198615.2"/>
</dbReference>
<dbReference type="SMR" id="Q3UE17"/>
<dbReference type="BioGRID" id="231873">
    <property type="interactions" value="2"/>
</dbReference>
<dbReference type="FunCoup" id="Q3UE17">
    <property type="interactions" value="1204"/>
</dbReference>
<dbReference type="STRING" id="10090.ENSMUSP00000100987"/>
<dbReference type="GlyGen" id="Q3UE17">
    <property type="glycosylation" value="3 sites, 1 O-linked glycan (1 site)"/>
</dbReference>
<dbReference type="iPTMnet" id="Q3UE17"/>
<dbReference type="PhosphoSitePlus" id="Q3UE17"/>
<dbReference type="ProteomicsDB" id="295555">
    <molecule id="Q3UE17-1"/>
</dbReference>
<dbReference type="ProteomicsDB" id="295556">
    <molecule id="Q3UE17-2"/>
</dbReference>
<dbReference type="Pumba" id="Q3UE17"/>
<dbReference type="DNASU" id="237400"/>
<dbReference type="GeneID" id="237400"/>
<dbReference type="KEGG" id="mmu:237400"/>
<dbReference type="AGR" id="MGI:2681847"/>
<dbReference type="CTD" id="399664"/>
<dbReference type="MGI" id="MGI:2681847">
    <property type="gene designation" value="Mex3d"/>
</dbReference>
<dbReference type="eggNOG" id="KOG2113">
    <property type="taxonomic scope" value="Eukaryota"/>
</dbReference>
<dbReference type="InParanoid" id="Q3UE17"/>
<dbReference type="OrthoDB" id="427410at2759"/>
<dbReference type="PhylomeDB" id="Q3UE17"/>
<dbReference type="BioGRID-ORCS" id="237400">
    <property type="hits" value="1 hit in 79 CRISPR screens"/>
</dbReference>
<dbReference type="ChiTaRS" id="Mex3d">
    <property type="organism name" value="mouse"/>
</dbReference>
<dbReference type="PRO" id="PR:Q3UE17"/>
<dbReference type="Proteomes" id="UP000000589">
    <property type="component" value="Unplaced"/>
</dbReference>
<dbReference type="RNAct" id="Q3UE17">
    <property type="molecule type" value="protein"/>
</dbReference>
<dbReference type="GO" id="GO:0005634">
    <property type="term" value="C:nucleus"/>
    <property type="evidence" value="ECO:0000250"/>
    <property type="project" value="BHF-UCL"/>
</dbReference>
<dbReference type="GO" id="GO:0048471">
    <property type="term" value="C:perinuclear region of cytoplasm"/>
    <property type="evidence" value="ECO:0000250"/>
    <property type="project" value="BHF-UCL"/>
</dbReference>
<dbReference type="GO" id="GO:0035925">
    <property type="term" value="F:mRNA 3'-UTR AU-rich region binding"/>
    <property type="evidence" value="ECO:0000250"/>
    <property type="project" value="BHF-UCL"/>
</dbReference>
<dbReference type="GO" id="GO:0003730">
    <property type="term" value="F:mRNA 3'-UTR binding"/>
    <property type="evidence" value="ECO:0000266"/>
    <property type="project" value="MGI"/>
</dbReference>
<dbReference type="GO" id="GO:0008270">
    <property type="term" value="F:zinc ion binding"/>
    <property type="evidence" value="ECO:0007669"/>
    <property type="project" value="UniProtKB-KW"/>
</dbReference>
<dbReference type="GO" id="GO:0006402">
    <property type="term" value="P:mRNA catabolic process"/>
    <property type="evidence" value="ECO:0000266"/>
    <property type="project" value="MGI"/>
</dbReference>
<dbReference type="GO" id="GO:0061157">
    <property type="term" value="P:mRNA destabilization"/>
    <property type="evidence" value="ECO:0000303"/>
    <property type="project" value="BHF-UCL"/>
</dbReference>
<dbReference type="GO" id="GO:0050779">
    <property type="term" value="P:RNA destabilization"/>
    <property type="evidence" value="ECO:0000266"/>
    <property type="project" value="MGI"/>
</dbReference>
<dbReference type="CDD" id="cd22423">
    <property type="entry name" value="KH-I_MEX3_rpt1"/>
    <property type="match status" value="1"/>
</dbReference>
<dbReference type="CDD" id="cd22424">
    <property type="entry name" value="KH-I_MEX3_rpt2"/>
    <property type="match status" value="1"/>
</dbReference>
<dbReference type="CDD" id="cd16518">
    <property type="entry name" value="RING-HC_MEX3"/>
    <property type="match status" value="1"/>
</dbReference>
<dbReference type="FunFam" id="3.30.1370.10:FF:000013">
    <property type="entry name" value="Mex-3 RNA-binding family member B"/>
    <property type="match status" value="1"/>
</dbReference>
<dbReference type="FunFam" id="3.30.40.10:FF:000090">
    <property type="entry name" value="Mex-3 RNA-binding family member C"/>
    <property type="match status" value="1"/>
</dbReference>
<dbReference type="FunFam" id="3.30.1370.10:FF:000012">
    <property type="entry name" value="Mex-3 RNA-binding family member D"/>
    <property type="match status" value="1"/>
</dbReference>
<dbReference type="Gene3D" id="3.30.1370.10">
    <property type="entry name" value="K Homology domain, type 1"/>
    <property type="match status" value="2"/>
</dbReference>
<dbReference type="Gene3D" id="3.30.40.10">
    <property type="entry name" value="Zinc/RING finger domain, C3HC4 (zinc finger)"/>
    <property type="match status" value="1"/>
</dbReference>
<dbReference type="InterPro" id="IPR047228">
    <property type="entry name" value="KH-I_MEX3_rpt1"/>
</dbReference>
<dbReference type="InterPro" id="IPR047226">
    <property type="entry name" value="KH-I_MEX3_rpt2"/>
</dbReference>
<dbReference type="InterPro" id="IPR004087">
    <property type="entry name" value="KH_dom"/>
</dbReference>
<dbReference type="InterPro" id="IPR004088">
    <property type="entry name" value="KH_dom_type_1"/>
</dbReference>
<dbReference type="InterPro" id="IPR036612">
    <property type="entry name" value="KH_dom_type_1_sf"/>
</dbReference>
<dbReference type="InterPro" id="IPR047227">
    <property type="entry name" value="MEX3"/>
</dbReference>
<dbReference type="InterPro" id="IPR001841">
    <property type="entry name" value="Znf_RING"/>
</dbReference>
<dbReference type="InterPro" id="IPR013083">
    <property type="entry name" value="Znf_RING/FYVE/PHD"/>
</dbReference>
<dbReference type="PANTHER" id="PTHR23285">
    <property type="entry name" value="RING FINGER AND KH DOMAIN CONTAINING PROTEIN 1"/>
    <property type="match status" value="1"/>
</dbReference>
<dbReference type="PANTHER" id="PTHR23285:SF3">
    <property type="entry name" value="RNA-BINDING PROTEIN MEX3D"/>
    <property type="match status" value="1"/>
</dbReference>
<dbReference type="Pfam" id="PF00013">
    <property type="entry name" value="KH_1"/>
    <property type="match status" value="2"/>
</dbReference>
<dbReference type="Pfam" id="PF13920">
    <property type="entry name" value="zf-C3HC4_3"/>
    <property type="match status" value="1"/>
</dbReference>
<dbReference type="SMART" id="SM00322">
    <property type="entry name" value="KH"/>
    <property type="match status" value="2"/>
</dbReference>
<dbReference type="SUPFAM" id="SSF54791">
    <property type="entry name" value="Eukaryotic type KH-domain (KH-domain type I)"/>
    <property type="match status" value="2"/>
</dbReference>
<dbReference type="SUPFAM" id="SSF57850">
    <property type="entry name" value="RING/U-box"/>
    <property type="match status" value="1"/>
</dbReference>
<dbReference type="PROSITE" id="PS50084">
    <property type="entry name" value="KH_TYPE_1"/>
    <property type="match status" value="2"/>
</dbReference>
<dbReference type="PROSITE" id="PS50089">
    <property type="entry name" value="ZF_RING_2"/>
    <property type="match status" value="1"/>
</dbReference>
<feature type="chain" id="PRO_0000281676" description="RNA-binding protein MEX3D">
    <location>
        <begin position="1"/>
        <end position="643"/>
    </location>
</feature>
<feature type="domain" description="KH 1" evidence="3">
    <location>
        <begin position="160"/>
        <end position="221"/>
    </location>
</feature>
<feature type="domain" description="KH 2" evidence="3">
    <location>
        <begin position="253"/>
        <end position="314"/>
    </location>
</feature>
<feature type="zinc finger region" description="RING-type" evidence="4">
    <location>
        <begin position="592"/>
        <end position="632"/>
    </location>
</feature>
<feature type="region of interest" description="Disordered" evidence="5">
    <location>
        <begin position="1"/>
        <end position="48"/>
    </location>
</feature>
<feature type="region of interest" description="Disordered" evidence="5">
    <location>
        <begin position="61"/>
        <end position="92"/>
    </location>
</feature>
<feature type="region of interest" description="Disordered" evidence="5">
    <location>
        <begin position="357"/>
        <end position="427"/>
    </location>
</feature>
<feature type="region of interest" description="Disordered" evidence="5">
    <location>
        <begin position="471"/>
        <end position="505"/>
    </location>
</feature>
<feature type="region of interest" description="Disordered" evidence="5">
    <location>
        <begin position="519"/>
        <end position="583"/>
    </location>
</feature>
<feature type="compositionally biased region" description="Low complexity" evidence="5">
    <location>
        <begin position="18"/>
        <end position="34"/>
    </location>
</feature>
<feature type="compositionally biased region" description="Acidic residues" evidence="5">
    <location>
        <begin position="83"/>
        <end position="92"/>
    </location>
</feature>
<feature type="compositionally biased region" description="Gly residues" evidence="5">
    <location>
        <begin position="405"/>
        <end position="418"/>
    </location>
</feature>
<feature type="compositionally biased region" description="Low complexity" evidence="5">
    <location>
        <begin position="495"/>
        <end position="505"/>
    </location>
</feature>
<feature type="compositionally biased region" description="Low complexity" evidence="5">
    <location>
        <begin position="531"/>
        <end position="556"/>
    </location>
</feature>
<feature type="compositionally biased region" description="Low complexity" evidence="5">
    <location>
        <begin position="567"/>
        <end position="583"/>
    </location>
</feature>
<feature type="modified residue" description="Phosphothreonine" evidence="2">
    <location>
        <position position="491"/>
    </location>
</feature>
<feature type="modified residue" description="Phosphoserine" evidence="7">
    <location>
        <position position="495"/>
    </location>
</feature>
<feature type="splice variant" id="VSP_024020" description="In isoform 2." evidence="6">
    <original>MPGSTGQPDAGGAGTGTTAGDPGHPHPALAGAEDAAPRPPPEPDDAAAALRLALDQLSALGLGGARPGDEGMATRSADGATECGEDEPAPPDELEVAVAPPVTA</original>
    <variation>MGVGPSMALAPSVTCAPSMALAPSVTSAPSMALAPSVTCAPCMAVAPSVTVAPSMALTPSVTLAPTMAVAS</variation>
    <location>
        <begin position="1"/>
        <end position="104"/>
    </location>
</feature>
<keyword id="KW-0025">Alternative splicing</keyword>
<keyword id="KW-0963">Cytoplasm</keyword>
<keyword id="KW-0479">Metal-binding</keyword>
<keyword id="KW-0539">Nucleus</keyword>
<keyword id="KW-0597">Phosphoprotein</keyword>
<keyword id="KW-1185">Reference proteome</keyword>
<keyword id="KW-0677">Repeat</keyword>
<keyword id="KW-0694">RNA-binding</keyword>
<keyword id="KW-0862">Zinc</keyword>
<keyword id="KW-0863">Zinc-finger</keyword>
<proteinExistence type="evidence at protein level"/>
<organism>
    <name type="scientific">Mus musculus</name>
    <name type="common">Mouse</name>
    <dbReference type="NCBI Taxonomy" id="10090"/>
    <lineage>
        <taxon>Eukaryota</taxon>
        <taxon>Metazoa</taxon>
        <taxon>Chordata</taxon>
        <taxon>Craniata</taxon>
        <taxon>Vertebrata</taxon>
        <taxon>Euteleostomi</taxon>
        <taxon>Mammalia</taxon>
        <taxon>Eutheria</taxon>
        <taxon>Euarchontoglires</taxon>
        <taxon>Glires</taxon>
        <taxon>Rodentia</taxon>
        <taxon>Myomorpha</taxon>
        <taxon>Muroidea</taxon>
        <taxon>Muridae</taxon>
        <taxon>Murinae</taxon>
        <taxon>Mus</taxon>
        <taxon>Mus</taxon>
    </lineage>
</organism>
<comment type="function">
    <text evidence="1">RNA binding protein, may be involved in post-transcriptional regulatory mechanisms.</text>
</comment>
<comment type="subcellular location">
    <subcellularLocation>
        <location evidence="1">Cytoplasm</location>
    </subcellularLocation>
    <subcellularLocation>
        <location evidence="1">Nucleus</location>
    </subcellularLocation>
    <text evidence="1">Predominantly expressed in the cytoplasm and shuttles between the cytoplasm and the nucleus through the CRM1 export pathway.</text>
</comment>
<comment type="alternative products">
    <event type="alternative splicing"/>
    <isoform>
        <id>Q3UE17-1</id>
        <name>1</name>
        <sequence type="displayed"/>
    </isoform>
    <isoform>
        <id>Q3UE17-2</id>
        <name>2</name>
        <sequence type="described" ref="VSP_024020"/>
    </isoform>
</comment>
<comment type="domain">
    <text evidence="1">Binds RNA through its KH domains.</text>
</comment>
<reference key="1">
    <citation type="journal article" date="2009" name="PLoS Biol.">
        <title>Lineage-specific biology revealed by a finished genome assembly of the mouse.</title>
        <authorList>
            <person name="Church D.M."/>
            <person name="Goodstadt L."/>
            <person name="Hillier L.W."/>
            <person name="Zody M.C."/>
            <person name="Goldstein S."/>
            <person name="She X."/>
            <person name="Bult C.J."/>
            <person name="Agarwala R."/>
            <person name="Cherry J.L."/>
            <person name="DiCuccio M."/>
            <person name="Hlavina W."/>
            <person name="Kapustin Y."/>
            <person name="Meric P."/>
            <person name="Maglott D."/>
            <person name="Birtle Z."/>
            <person name="Marques A.C."/>
            <person name="Graves T."/>
            <person name="Zhou S."/>
            <person name="Teague B."/>
            <person name="Potamousis K."/>
            <person name="Churas C."/>
            <person name="Place M."/>
            <person name="Herschleb J."/>
            <person name="Runnheim R."/>
            <person name="Forrest D."/>
            <person name="Amos-Landgraf J."/>
            <person name="Schwartz D.C."/>
            <person name="Cheng Z."/>
            <person name="Lindblad-Toh K."/>
            <person name="Eichler E.E."/>
            <person name="Ponting C.P."/>
        </authorList>
    </citation>
    <scope>NUCLEOTIDE SEQUENCE [LARGE SCALE GENOMIC DNA]</scope>
    <source>
        <strain>C57BL/6J</strain>
    </source>
</reference>
<reference key="2">
    <citation type="journal article" date="2005" name="Science">
        <title>The transcriptional landscape of the mammalian genome.</title>
        <authorList>
            <person name="Carninci P."/>
            <person name="Kasukawa T."/>
            <person name="Katayama S."/>
            <person name="Gough J."/>
            <person name="Frith M.C."/>
            <person name="Maeda N."/>
            <person name="Oyama R."/>
            <person name="Ravasi T."/>
            <person name="Lenhard B."/>
            <person name="Wells C."/>
            <person name="Kodzius R."/>
            <person name="Shimokawa K."/>
            <person name="Bajic V.B."/>
            <person name="Brenner S.E."/>
            <person name="Batalov S."/>
            <person name="Forrest A.R."/>
            <person name="Zavolan M."/>
            <person name="Davis M.J."/>
            <person name="Wilming L.G."/>
            <person name="Aidinis V."/>
            <person name="Allen J.E."/>
            <person name="Ambesi-Impiombato A."/>
            <person name="Apweiler R."/>
            <person name="Aturaliya R.N."/>
            <person name="Bailey T.L."/>
            <person name="Bansal M."/>
            <person name="Baxter L."/>
            <person name="Beisel K.W."/>
            <person name="Bersano T."/>
            <person name="Bono H."/>
            <person name="Chalk A.M."/>
            <person name="Chiu K.P."/>
            <person name="Choudhary V."/>
            <person name="Christoffels A."/>
            <person name="Clutterbuck D.R."/>
            <person name="Crowe M.L."/>
            <person name="Dalla E."/>
            <person name="Dalrymple B.P."/>
            <person name="de Bono B."/>
            <person name="Della Gatta G."/>
            <person name="di Bernardo D."/>
            <person name="Down T."/>
            <person name="Engstrom P."/>
            <person name="Fagiolini M."/>
            <person name="Faulkner G."/>
            <person name="Fletcher C.F."/>
            <person name="Fukushima T."/>
            <person name="Furuno M."/>
            <person name="Futaki S."/>
            <person name="Gariboldi M."/>
            <person name="Georgii-Hemming P."/>
            <person name="Gingeras T.R."/>
            <person name="Gojobori T."/>
            <person name="Green R.E."/>
            <person name="Gustincich S."/>
            <person name="Harbers M."/>
            <person name="Hayashi Y."/>
            <person name="Hensch T.K."/>
            <person name="Hirokawa N."/>
            <person name="Hill D."/>
            <person name="Huminiecki L."/>
            <person name="Iacono M."/>
            <person name="Ikeo K."/>
            <person name="Iwama A."/>
            <person name="Ishikawa T."/>
            <person name="Jakt M."/>
            <person name="Kanapin A."/>
            <person name="Katoh M."/>
            <person name="Kawasawa Y."/>
            <person name="Kelso J."/>
            <person name="Kitamura H."/>
            <person name="Kitano H."/>
            <person name="Kollias G."/>
            <person name="Krishnan S.P."/>
            <person name="Kruger A."/>
            <person name="Kummerfeld S.K."/>
            <person name="Kurochkin I.V."/>
            <person name="Lareau L.F."/>
            <person name="Lazarevic D."/>
            <person name="Lipovich L."/>
            <person name="Liu J."/>
            <person name="Liuni S."/>
            <person name="McWilliam S."/>
            <person name="Madan Babu M."/>
            <person name="Madera M."/>
            <person name="Marchionni L."/>
            <person name="Matsuda H."/>
            <person name="Matsuzawa S."/>
            <person name="Miki H."/>
            <person name="Mignone F."/>
            <person name="Miyake S."/>
            <person name="Morris K."/>
            <person name="Mottagui-Tabar S."/>
            <person name="Mulder N."/>
            <person name="Nakano N."/>
            <person name="Nakauchi H."/>
            <person name="Ng P."/>
            <person name="Nilsson R."/>
            <person name="Nishiguchi S."/>
            <person name="Nishikawa S."/>
            <person name="Nori F."/>
            <person name="Ohara O."/>
            <person name="Okazaki Y."/>
            <person name="Orlando V."/>
            <person name="Pang K.C."/>
            <person name="Pavan W.J."/>
            <person name="Pavesi G."/>
            <person name="Pesole G."/>
            <person name="Petrovsky N."/>
            <person name="Piazza S."/>
            <person name="Reed J."/>
            <person name="Reid J.F."/>
            <person name="Ring B.Z."/>
            <person name="Ringwald M."/>
            <person name="Rost B."/>
            <person name="Ruan Y."/>
            <person name="Salzberg S.L."/>
            <person name="Sandelin A."/>
            <person name="Schneider C."/>
            <person name="Schoenbach C."/>
            <person name="Sekiguchi K."/>
            <person name="Semple C.A."/>
            <person name="Seno S."/>
            <person name="Sessa L."/>
            <person name="Sheng Y."/>
            <person name="Shibata Y."/>
            <person name="Shimada H."/>
            <person name="Shimada K."/>
            <person name="Silva D."/>
            <person name="Sinclair B."/>
            <person name="Sperling S."/>
            <person name="Stupka E."/>
            <person name="Sugiura K."/>
            <person name="Sultana R."/>
            <person name="Takenaka Y."/>
            <person name="Taki K."/>
            <person name="Tammoja K."/>
            <person name="Tan S.L."/>
            <person name="Tang S."/>
            <person name="Taylor M.S."/>
            <person name="Tegner J."/>
            <person name="Teichmann S.A."/>
            <person name="Ueda H.R."/>
            <person name="van Nimwegen E."/>
            <person name="Verardo R."/>
            <person name="Wei C.L."/>
            <person name="Yagi K."/>
            <person name="Yamanishi H."/>
            <person name="Zabarovsky E."/>
            <person name="Zhu S."/>
            <person name="Zimmer A."/>
            <person name="Hide W."/>
            <person name="Bult C."/>
            <person name="Grimmond S.M."/>
            <person name="Teasdale R.D."/>
            <person name="Liu E.T."/>
            <person name="Brusic V."/>
            <person name="Quackenbush J."/>
            <person name="Wahlestedt C."/>
            <person name="Mattick J.S."/>
            <person name="Hume D.A."/>
            <person name="Kai C."/>
            <person name="Sasaki D."/>
            <person name="Tomaru Y."/>
            <person name="Fukuda S."/>
            <person name="Kanamori-Katayama M."/>
            <person name="Suzuki M."/>
            <person name="Aoki J."/>
            <person name="Arakawa T."/>
            <person name="Iida J."/>
            <person name="Imamura K."/>
            <person name="Itoh M."/>
            <person name="Kato T."/>
            <person name="Kawaji H."/>
            <person name="Kawagashira N."/>
            <person name="Kawashima T."/>
            <person name="Kojima M."/>
            <person name="Kondo S."/>
            <person name="Konno H."/>
            <person name="Nakano K."/>
            <person name="Ninomiya N."/>
            <person name="Nishio T."/>
            <person name="Okada M."/>
            <person name="Plessy C."/>
            <person name="Shibata K."/>
            <person name="Shiraki T."/>
            <person name="Suzuki S."/>
            <person name="Tagami M."/>
            <person name="Waki K."/>
            <person name="Watahiki A."/>
            <person name="Okamura-Oho Y."/>
            <person name="Suzuki H."/>
            <person name="Kawai J."/>
            <person name="Hayashizaki Y."/>
        </authorList>
    </citation>
    <scope>NUCLEOTIDE SEQUENCE [LARGE SCALE MRNA] OF 1-427 (ISOFORM 2)</scope>
    <source>
        <strain>C57BL/6J</strain>
        <tissue>Bone marrow</tissue>
    </source>
</reference>
<reference key="3">
    <citation type="journal article" date="2010" name="Cell">
        <title>A tissue-specific atlas of mouse protein phosphorylation and expression.</title>
        <authorList>
            <person name="Huttlin E.L."/>
            <person name="Jedrychowski M.P."/>
            <person name="Elias J.E."/>
            <person name="Goswami T."/>
            <person name="Rad R."/>
            <person name="Beausoleil S.A."/>
            <person name="Villen J."/>
            <person name="Haas W."/>
            <person name="Sowa M.E."/>
            <person name="Gygi S.P."/>
        </authorList>
    </citation>
    <scope>PHOSPHORYLATION [LARGE SCALE ANALYSIS] AT SER-495</scope>
    <scope>IDENTIFICATION BY MASS SPECTROMETRY [LARGE SCALE ANALYSIS]</scope>
    <source>
        <tissue>Brain</tissue>
        <tissue>Kidney</tissue>
        <tissue>Testis</tissue>
    </source>
</reference>
<gene>
    <name type="primary">Mex3d</name>
    <name type="synonym">Rkhd1</name>
</gene>
<name>MEX3D_MOUSE</name>
<protein>
    <recommendedName>
        <fullName>RNA-binding protein MEX3D</fullName>
    </recommendedName>
    <alternativeName>
        <fullName>RING finger and KH domain-containing protein 1</fullName>
    </alternativeName>
</protein>